<evidence type="ECO:0000255" key="1">
    <source>
        <dbReference type="HAMAP-Rule" id="MF_01543"/>
    </source>
</evidence>
<organism>
    <name type="scientific">Bacillus cereus (strain AH820)</name>
    <dbReference type="NCBI Taxonomy" id="405535"/>
    <lineage>
        <taxon>Bacteria</taxon>
        <taxon>Bacillati</taxon>
        <taxon>Bacillota</taxon>
        <taxon>Bacilli</taxon>
        <taxon>Bacillales</taxon>
        <taxon>Bacillaceae</taxon>
        <taxon>Bacillus</taxon>
        <taxon>Bacillus cereus group</taxon>
    </lineage>
</organism>
<sequence length="562" mass="60489">MTTTTTVKSDIEIAQEANMKKIQEIAADLNILEDELEPYGHYKGKLSLDIFKRLQNEKDGKVVLVTAINPTPAGEGKSTVTVGLGQAFNKIGKKTVIALREPSLGPTMGLKGGAAGGGFSQVVPMEDINLHFTGDIHAITTANNALAAFIDNHIQQGNTLGIDTRKIVWKRCVDLNDRALRNVVIGLGGPVQGVPREDGFDITVASEIMAVFCLATDIQDLKARLSRIVVAYNFANQPVTVKDLGVEGALTLLLKDALKPNLVQTLENTPAIIHGGPFANIAHGCNSVIATTMAAKLGDYVITEAGFGADLGAEKFLDIKARAAGIKPEAVVIVATIRALKMHGGVAKDQLKEENVDALAKGMENLQKHVETIQSFGVPFVIAINKFITDTDAEVAYLQEWCNERGYAVSLTEVWEKGGQGGVDLAEKVLKEIEKGENNYAPLYELELPLEEKIRTIAQKVYGAKDIEFAPKARKQLAQYEGEGWSNLPICMAKTQYSLSDDATKLGRPSDFIVTIRELKPSIGAGFIVALTGTMLTMPGLPKQPAALQMDVNEDGKAVGLF</sequence>
<proteinExistence type="inferred from homology"/>
<accession>B7JLG8</accession>
<protein>
    <recommendedName>
        <fullName evidence="1">Formate--tetrahydrofolate ligase</fullName>
        <ecNumber evidence="1">6.3.4.3</ecNumber>
    </recommendedName>
    <alternativeName>
        <fullName evidence="1">Formyltetrahydrofolate synthetase</fullName>
        <shortName evidence="1">FHS</shortName>
        <shortName evidence="1">FTHFS</shortName>
    </alternativeName>
</protein>
<keyword id="KW-0067">ATP-binding</keyword>
<keyword id="KW-0436">Ligase</keyword>
<keyword id="KW-0547">Nucleotide-binding</keyword>
<keyword id="KW-0554">One-carbon metabolism</keyword>
<reference key="1">
    <citation type="submission" date="2008-10" db="EMBL/GenBank/DDBJ databases">
        <title>Genome sequence of Bacillus cereus AH820.</title>
        <authorList>
            <person name="Dodson R.J."/>
            <person name="Durkin A.S."/>
            <person name="Rosovitz M.J."/>
            <person name="Rasko D.A."/>
            <person name="Hoffmaster A."/>
            <person name="Ravel J."/>
            <person name="Sutton G."/>
        </authorList>
    </citation>
    <scope>NUCLEOTIDE SEQUENCE [LARGE SCALE GENOMIC DNA]</scope>
    <source>
        <strain>AH820</strain>
    </source>
</reference>
<feature type="chain" id="PRO_1000146672" description="Formate--tetrahydrofolate ligase">
    <location>
        <begin position="1"/>
        <end position="562"/>
    </location>
</feature>
<feature type="binding site" evidence="1">
    <location>
        <begin position="71"/>
        <end position="78"/>
    </location>
    <ligand>
        <name>ATP</name>
        <dbReference type="ChEBI" id="CHEBI:30616"/>
    </ligand>
</feature>
<dbReference type="EC" id="6.3.4.3" evidence="1"/>
<dbReference type="EMBL" id="CP001283">
    <property type="protein sequence ID" value="ACK91551.1"/>
    <property type="molecule type" value="Genomic_DNA"/>
</dbReference>
<dbReference type="RefSeq" id="WP_003159099.1">
    <property type="nucleotide sequence ID" value="NC_011773.1"/>
</dbReference>
<dbReference type="SMR" id="B7JLG8"/>
<dbReference type="KEGG" id="bcu:BCAH820_2141"/>
<dbReference type="HOGENOM" id="CLU_003601_3_3_9"/>
<dbReference type="UniPathway" id="UPA00193"/>
<dbReference type="Proteomes" id="UP000001363">
    <property type="component" value="Chromosome"/>
</dbReference>
<dbReference type="GO" id="GO:0005524">
    <property type="term" value="F:ATP binding"/>
    <property type="evidence" value="ECO:0007669"/>
    <property type="project" value="UniProtKB-UniRule"/>
</dbReference>
<dbReference type="GO" id="GO:0004329">
    <property type="term" value="F:formate-tetrahydrofolate ligase activity"/>
    <property type="evidence" value="ECO:0007669"/>
    <property type="project" value="UniProtKB-UniRule"/>
</dbReference>
<dbReference type="GO" id="GO:0035999">
    <property type="term" value="P:tetrahydrofolate interconversion"/>
    <property type="evidence" value="ECO:0007669"/>
    <property type="project" value="UniProtKB-UniRule"/>
</dbReference>
<dbReference type="CDD" id="cd00477">
    <property type="entry name" value="FTHFS"/>
    <property type="match status" value="1"/>
</dbReference>
<dbReference type="FunFam" id="3.30.1510.10:FF:000001">
    <property type="entry name" value="Formate--tetrahydrofolate ligase"/>
    <property type="match status" value="1"/>
</dbReference>
<dbReference type="FunFam" id="3.10.410.10:FF:000001">
    <property type="entry name" value="Putative formate--tetrahydrofolate ligase"/>
    <property type="match status" value="1"/>
</dbReference>
<dbReference type="Gene3D" id="3.30.1510.10">
    <property type="entry name" value="Domain 2, N(10)-formyltetrahydrofolate synthetase"/>
    <property type="match status" value="1"/>
</dbReference>
<dbReference type="Gene3D" id="3.10.410.10">
    <property type="entry name" value="Formyltetrahydrofolate synthetase, domain 3"/>
    <property type="match status" value="1"/>
</dbReference>
<dbReference type="Gene3D" id="3.40.50.300">
    <property type="entry name" value="P-loop containing nucleotide triphosphate hydrolases"/>
    <property type="match status" value="1"/>
</dbReference>
<dbReference type="HAMAP" id="MF_01543">
    <property type="entry name" value="FTHFS"/>
    <property type="match status" value="1"/>
</dbReference>
<dbReference type="InterPro" id="IPR000559">
    <property type="entry name" value="Formate_THF_ligase"/>
</dbReference>
<dbReference type="InterPro" id="IPR020628">
    <property type="entry name" value="Formate_THF_ligase_CS"/>
</dbReference>
<dbReference type="InterPro" id="IPR027417">
    <property type="entry name" value="P-loop_NTPase"/>
</dbReference>
<dbReference type="NCBIfam" id="NF010030">
    <property type="entry name" value="PRK13505.1"/>
    <property type="match status" value="1"/>
</dbReference>
<dbReference type="Pfam" id="PF01268">
    <property type="entry name" value="FTHFS"/>
    <property type="match status" value="1"/>
</dbReference>
<dbReference type="SUPFAM" id="SSF52540">
    <property type="entry name" value="P-loop containing nucleoside triphosphate hydrolases"/>
    <property type="match status" value="1"/>
</dbReference>
<dbReference type="PROSITE" id="PS00721">
    <property type="entry name" value="FTHFS_1"/>
    <property type="match status" value="1"/>
</dbReference>
<dbReference type="PROSITE" id="PS00722">
    <property type="entry name" value="FTHFS_2"/>
    <property type="match status" value="1"/>
</dbReference>
<name>FTHS_BACC0</name>
<comment type="catalytic activity">
    <reaction evidence="1">
        <text>(6S)-5,6,7,8-tetrahydrofolate + formate + ATP = (6R)-10-formyltetrahydrofolate + ADP + phosphate</text>
        <dbReference type="Rhea" id="RHEA:20221"/>
        <dbReference type="ChEBI" id="CHEBI:15740"/>
        <dbReference type="ChEBI" id="CHEBI:30616"/>
        <dbReference type="ChEBI" id="CHEBI:43474"/>
        <dbReference type="ChEBI" id="CHEBI:57453"/>
        <dbReference type="ChEBI" id="CHEBI:195366"/>
        <dbReference type="ChEBI" id="CHEBI:456216"/>
        <dbReference type="EC" id="6.3.4.3"/>
    </reaction>
</comment>
<comment type="pathway">
    <text evidence="1">One-carbon metabolism; tetrahydrofolate interconversion.</text>
</comment>
<comment type="similarity">
    <text evidence="1">Belongs to the formate--tetrahydrofolate ligase family.</text>
</comment>
<gene>
    <name evidence="1" type="primary">fhs</name>
    <name type="ordered locus">BCAH820_2141</name>
</gene>